<sequence length="271" mass="31215">MDLINTSRLHETNKQFKNKNEATKLHWRTFFNNFGPFTSIIFSMLMYLIFSKNDFNGTPFLRFVGVLFPSLYSSMEYFLLLFDSWRSDHRVLLSLHGVLYLLLNTILFMFSFVTIISTIAFTASKWNDNDDPATFTMAIPSFFVSFAYLLSISCDFSAKSVLSIGMSTNVPIDLLILLIPIIGTILLIEKSRYHFYFFIVPAILIPVRSLKERYFVSGKSSLSVAPWRTMVFVFMLILGVFVYAFLAYGSVEILYQYLCSFNKPPSQLGNE</sequence>
<name>Y902_ENCCU</name>
<organism>
    <name type="scientific">Encephalitozoon cuniculi (strain GB-M1)</name>
    <name type="common">Microsporidian parasite</name>
    <dbReference type="NCBI Taxonomy" id="284813"/>
    <lineage>
        <taxon>Eukaryota</taxon>
        <taxon>Fungi</taxon>
        <taxon>Fungi incertae sedis</taxon>
        <taxon>Microsporidia</taxon>
        <taxon>Unikaryonidae</taxon>
        <taxon>Encephalitozoon</taxon>
    </lineage>
</organism>
<evidence type="ECO:0000305" key="1"/>
<proteinExistence type="inferred from homology"/>
<comment type="similarity">
    <text evidence="1">Belongs to the UPF0328 family.</text>
</comment>
<gene>
    <name type="ordered locus">ECU09_0020</name>
</gene>
<reference key="1">
    <citation type="journal article" date="2001" name="Nature">
        <title>Genome sequence and gene compaction of the eukaryote parasite Encephalitozoon cuniculi.</title>
        <authorList>
            <person name="Katinka M.D."/>
            <person name="Duprat S."/>
            <person name="Cornillot E."/>
            <person name="Metenier G."/>
            <person name="Thomarat F."/>
            <person name="Prensier G."/>
            <person name="Barbe V."/>
            <person name="Peyretaillade E."/>
            <person name="Brottier P."/>
            <person name="Wincker P."/>
            <person name="Delbac F."/>
            <person name="El Alaoui H."/>
            <person name="Peyret P."/>
            <person name="Saurin W."/>
            <person name="Gouy M."/>
            <person name="Weissenbach J."/>
            <person name="Vivares C.P."/>
        </authorList>
    </citation>
    <scope>NUCLEOTIDE SEQUENCE [LARGE SCALE GENOMIC DNA]</scope>
    <source>
        <strain>GB-M1</strain>
    </source>
</reference>
<accession>Q8STY8</accession>
<dbReference type="EMBL" id="AL590451">
    <property type="protein sequence ID" value="CAD26973.1"/>
    <property type="molecule type" value="Genomic_DNA"/>
</dbReference>
<dbReference type="RefSeq" id="NP_001402254.1">
    <property type="nucleotide sequence ID" value="NM_001415302.1"/>
</dbReference>
<dbReference type="RefSeq" id="XP_955554.1">
    <property type="nucleotide sequence ID" value="XM_950461.1"/>
</dbReference>
<dbReference type="GeneID" id="860338"/>
<dbReference type="VEuPathDB" id="MicrosporidiaDB:ECU09_0020"/>
<dbReference type="HOGENOM" id="CLU_059413_0_0_1"/>
<dbReference type="InParanoid" id="Q8STY8"/>
<dbReference type="OrthoDB" id="10662099at2759"/>
<dbReference type="Proteomes" id="UP000000819">
    <property type="component" value="Chromosome IX"/>
</dbReference>
<dbReference type="InterPro" id="IPR019081">
    <property type="entry name" value="UPF0328"/>
</dbReference>
<dbReference type="Pfam" id="PF09591">
    <property type="entry name" value="DUF2463"/>
    <property type="match status" value="1"/>
</dbReference>
<feature type="chain" id="PRO_0000223140" description="UPF0328 protein ECU09_0020">
    <location>
        <begin position="1"/>
        <end position="271"/>
    </location>
</feature>
<protein>
    <recommendedName>
        <fullName>UPF0328 protein ECU09_0020</fullName>
    </recommendedName>
</protein>
<keyword id="KW-1185">Reference proteome</keyword>